<dbReference type="EC" id="3.6.1.-" evidence="1"/>
<dbReference type="EMBL" id="CP000964">
    <property type="protein sequence ID" value="ACI08782.1"/>
    <property type="molecule type" value="Genomic_DNA"/>
</dbReference>
<dbReference type="SMR" id="B5XUP9"/>
<dbReference type="KEGG" id="kpe:KPK_0876"/>
<dbReference type="HOGENOM" id="CLU_087195_3_2_6"/>
<dbReference type="Proteomes" id="UP000001734">
    <property type="component" value="Chromosome"/>
</dbReference>
<dbReference type="GO" id="GO:0005737">
    <property type="term" value="C:cytoplasm"/>
    <property type="evidence" value="ECO:0007669"/>
    <property type="project" value="TreeGrafter"/>
</dbReference>
<dbReference type="GO" id="GO:0034353">
    <property type="term" value="F:mRNA 5'-diphosphatase activity"/>
    <property type="evidence" value="ECO:0007669"/>
    <property type="project" value="TreeGrafter"/>
</dbReference>
<dbReference type="GO" id="GO:0006402">
    <property type="term" value="P:mRNA catabolic process"/>
    <property type="evidence" value="ECO:0007669"/>
    <property type="project" value="TreeGrafter"/>
</dbReference>
<dbReference type="CDD" id="cd03671">
    <property type="entry name" value="NUDIX_Ap4A_hydrolase_plant_like"/>
    <property type="match status" value="1"/>
</dbReference>
<dbReference type="FunFam" id="3.90.79.10:FF:000001">
    <property type="entry name" value="RNA pyrophosphohydrolase"/>
    <property type="match status" value="1"/>
</dbReference>
<dbReference type="Gene3D" id="3.90.79.10">
    <property type="entry name" value="Nucleoside Triphosphate Pyrophosphohydrolase"/>
    <property type="match status" value="1"/>
</dbReference>
<dbReference type="HAMAP" id="MF_00298">
    <property type="entry name" value="Nudix_RppH"/>
    <property type="match status" value="1"/>
</dbReference>
<dbReference type="InterPro" id="IPR020476">
    <property type="entry name" value="Nudix_hydrolase"/>
</dbReference>
<dbReference type="InterPro" id="IPR015797">
    <property type="entry name" value="NUDIX_hydrolase-like_dom_sf"/>
</dbReference>
<dbReference type="InterPro" id="IPR020084">
    <property type="entry name" value="NUDIX_hydrolase_CS"/>
</dbReference>
<dbReference type="InterPro" id="IPR000086">
    <property type="entry name" value="NUDIX_hydrolase_dom"/>
</dbReference>
<dbReference type="InterPro" id="IPR022927">
    <property type="entry name" value="RppH"/>
</dbReference>
<dbReference type="NCBIfam" id="NF001934">
    <property type="entry name" value="PRK00714.1-1"/>
    <property type="match status" value="1"/>
</dbReference>
<dbReference type="NCBIfam" id="NF001937">
    <property type="entry name" value="PRK00714.1-4"/>
    <property type="match status" value="1"/>
</dbReference>
<dbReference type="NCBIfam" id="NF001938">
    <property type="entry name" value="PRK00714.1-5"/>
    <property type="match status" value="1"/>
</dbReference>
<dbReference type="PANTHER" id="PTHR23114">
    <property type="entry name" value="M7GPPPN-MRNA HYDROLASE"/>
    <property type="match status" value="1"/>
</dbReference>
<dbReference type="PANTHER" id="PTHR23114:SF17">
    <property type="entry name" value="M7GPPPN-MRNA HYDROLASE"/>
    <property type="match status" value="1"/>
</dbReference>
<dbReference type="Pfam" id="PF00293">
    <property type="entry name" value="NUDIX"/>
    <property type="match status" value="1"/>
</dbReference>
<dbReference type="PRINTS" id="PR00502">
    <property type="entry name" value="NUDIXFAMILY"/>
</dbReference>
<dbReference type="SUPFAM" id="SSF55811">
    <property type="entry name" value="Nudix"/>
    <property type="match status" value="1"/>
</dbReference>
<dbReference type="PROSITE" id="PS51462">
    <property type="entry name" value="NUDIX"/>
    <property type="match status" value="1"/>
</dbReference>
<dbReference type="PROSITE" id="PS00893">
    <property type="entry name" value="NUDIX_BOX"/>
    <property type="match status" value="1"/>
</dbReference>
<accession>B5XUP9</accession>
<sequence>MIDDDGYRPNVGIVICNRQGQVMWARRYGQHSWQFPQGGINPGESAEQAMYRELFEEVGLSRKDVRILASTRNWLRYKLPKRLVRWDTKPVCIGQKQKWFLLQLIGNDADINMQTSSTPEFDGWRWVSYWYPVRQVVSFKRDVYRRVMKEFASVTMSLAESAPKPQSAPAYRRKRG</sequence>
<comment type="function">
    <text evidence="1">Accelerates the degradation of transcripts by removing pyrophosphate from the 5'-end of triphosphorylated RNA, leading to a more labile monophosphorylated state that can stimulate subsequent ribonuclease cleavage.</text>
</comment>
<comment type="cofactor">
    <cofactor evidence="1">
        <name>a divalent metal cation</name>
        <dbReference type="ChEBI" id="CHEBI:60240"/>
    </cofactor>
</comment>
<comment type="similarity">
    <text evidence="1">Belongs to the Nudix hydrolase family. RppH subfamily.</text>
</comment>
<evidence type="ECO:0000255" key="1">
    <source>
        <dbReference type="HAMAP-Rule" id="MF_00298"/>
    </source>
</evidence>
<keyword id="KW-0378">Hydrolase</keyword>
<proteinExistence type="inferred from homology"/>
<organism>
    <name type="scientific">Klebsiella pneumoniae (strain 342)</name>
    <dbReference type="NCBI Taxonomy" id="507522"/>
    <lineage>
        <taxon>Bacteria</taxon>
        <taxon>Pseudomonadati</taxon>
        <taxon>Pseudomonadota</taxon>
        <taxon>Gammaproteobacteria</taxon>
        <taxon>Enterobacterales</taxon>
        <taxon>Enterobacteriaceae</taxon>
        <taxon>Klebsiella/Raoultella group</taxon>
        <taxon>Klebsiella</taxon>
        <taxon>Klebsiella pneumoniae complex</taxon>
    </lineage>
</organism>
<reference key="1">
    <citation type="journal article" date="2008" name="PLoS Genet.">
        <title>Complete genome sequence of the N2-fixing broad host range endophyte Klebsiella pneumoniae 342 and virulence predictions verified in mice.</title>
        <authorList>
            <person name="Fouts D.E."/>
            <person name="Tyler H.L."/>
            <person name="DeBoy R.T."/>
            <person name="Daugherty S."/>
            <person name="Ren Q."/>
            <person name="Badger J.H."/>
            <person name="Durkin A.S."/>
            <person name="Huot H."/>
            <person name="Shrivastava S."/>
            <person name="Kothari S."/>
            <person name="Dodson R.J."/>
            <person name="Mohamoud Y."/>
            <person name="Khouri H."/>
            <person name="Roesch L.F.W."/>
            <person name="Krogfelt K.A."/>
            <person name="Struve C."/>
            <person name="Triplett E.W."/>
            <person name="Methe B.A."/>
        </authorList>
    </citation>
    <scope>NUCLEOTIDE SEQUENCE [LARGE SCALE GENOMIC DNA]</scope>
    <source>
        <strain>342</strain>
    </source>
</reference>
<protein>
    <recommendedName>
        <fullName evidence="1">RNA pyrophosphohydrolase</fullName>
        <ecNumber evidence="1">3.6.1.-</ecNumber>
    </recommendedName>
    <alternativeName>
        <fullName evidence="1">(Di)nucleoside polyphosphate hydrolase</fullName>
    </alternativeName>
</protein>
<feature type="chain" id="PRO_1000115283" description="RNA pyrophosphohydrolase">
    <location>
        <begin position="1"/>
        <end position="176"/>
    </location>
</feature>
<feature type="domain" description="Nudix hydrolase" evidence="1">
    <location>
        <begin position="6"/>
        <end position="149"/>
    </location>
</feature>
<feature type="short sequence motif" description="Nudix box">
    <location>
        <begin position="38"/>
        <end position="59"/>
    </location>
</feature>
<gene>
    <name evidence="1" type="primary">rppH</name>
    <name evidence="1" type="synonym">nudH</name>
    <name type="ordered locus">KPK_0876</name>
</gene>
<name>RPPH_KLEP3</name>